<sequence length="106" mass="11722">MARSLCFMAFAVLAMMLFVAYEVQAKSTCKAESNTFPGLCITKPPCRKACLSEKFTDGKCSKILRRCICYKPCVFDGKMIQTGAENLAEEAETLAAALLEEEMMDN</sequence>
<evidence type="ECO:0000250" key="1"/>
<evidence type="ECO:0000255" key="2"/>
<evidence type="ECO:0000305" key="3"/>
<organism>
    <name type="scientific">Nicotiana paniculata</name>
    <dbReference type="NCBI Taxonomy" id="62141"/>
    <lineage>
        <taxon>Eukaryota</taxon>
        <taxon>Viridiplantae</taxon>
        <taxon>Streptophyta</taxon>
        <taxon>Embryophyta</taxon>
        <taxon>Tracheophyta</taxon>
        <taxon>Spermatophyta</taxon>
        <taxon>Magnoliopsida</taxon>
        <taxon>eudicotyledons</taxon>
        <taxon>Gunneridae</taxon>
        <taxon>Pentapetalae</taxon>
        <taxon>asterids</taxon>
        <taxon>lamiids</taxon>
        <taxon>Solanales</taxon>
        <taxon>Solanaceae</taxon>
        <taxon>Nicotianoideae</taxon>
        <taxon>Nicotianeae</taxon>
        <taxon>Nicotiana</taxon>
    </lineage>
</organism>
<keyword id="KW-0929">Antimicrobial</keyword>
<keyword id="KW-1015">Disulfide bond</keyword>
<keyword id="KW-0295">Fungicide</keyword>
<keyword id="KW-0611">Plant defense</keyword>
<keyword id="KW-0964">Secreted</keyword>
<keyword id="KW-0732">Signal</keyword>
<keyword id="KW-0346">Stress response</keyword>
<keyword id="KW-0926">Vacuole</keyword>
<protein>
    <recommendedName>
        <fullName>Defensin-like protein 1</fullName>
    </recommendedName>
    <alternativeName>
        <fullName>Gamma-thionin 1</fullName>
    </alternativeName>
</protein>
<gene>
    <name type="primary">THIO1</name>
</gene>
<comment type="subcellular location">
    <subcellularLocation>
        <location evidence="1">Secreted</location>
    </subcellularLocation>
    <subcellularLocation>
        <location evidence="1">Vacuole</location>
    </subcellularLocation>
</comment>
<comment type="induction">
    <text>By salt stress.</text>
</comment>
<comment type="similarity">
    <text evidence="3">Belongs to the DEFL family.</text>
</comment>
<comment type="caution">
    <text evidence="3">Was initially thought (Ref.1) to be a thionin.</text>
</comment>
<name>DEF1_NICPA</name>
<dbReference type="EMBL" id="AB005250">
    <property type="protein sequence ID" value="BAA21325.1"/>
    <property type="molecule type" value="mRNA"/>
</dbReference>
<dbReference type="SMR" id="O24115"/>
<dbReference type="GO" id="GO:0005576">
    <property type="term" value="C:extracellular region"/>
    <property type="evidence" value="ECO:0007669"/>
    <property type="project" value="UniProtKB-SubCell"/>
</dbReference>
<dbReference type="GO" id="GO:0005773">
    <property type="term" value="C:vacuole"/>
    <property type="evidence" value="ECO:0007669"/>
    <property type="project" value="UniProtKB-SubCell"/>
</dbReference>
<dbReference type="GO" id="GO:0050832">
    <property type="term" value="P:defense response to fungus"/>
    <property type="evidence" value="ECO:0007669"/>
    <property type="project" value="UniProtKB-KW"/>
</dbReference>
<dbReference type="GO" id="GO:0031640">
    <property type="term" value="P:killing of cells of another organism"/>
    <property type="evidence" value="ECO:0007669"/>
    <property type="project" value="UniProtKB-KW"/>
</dbReference>
<dbReference type="CDD" id="cd00107">
    <property type="entry name" value="Knot1"/>
    <property type="match status" value="1"/>
</dbReference>
<dbReference type="Gene3D" id="3.30.30.10">
    <property type="entry name" value="Knottin, scorpion toxin-like"/>
    <property type="match status" value="1"/>
</dbReference>
<dbReference type="InterPro" id="IPR008176">
    <property type="entry name" value="Defensin_plant"/>
</dbReference>
<dbReference type="InterPro" id="IPR003614">
    <property type="entry name" value="Scorpion_toxin-like"/>
</dbReference>
<dbReference type="InterPro" id="IPR036574">
    <property type="entry name" value="Scorpion_toxin-like_sf"/>
</dbReference>
<dbReference type="PANTHER" id="PTHR33147:SF128">
    <property type="entry name" value="DEFENSIN-LIKE PROTEIN"/>
    <property type="match status" value="1"/>
</dbReference>
<dbReference type="PANTHER" id="PTHR33147">
    <property type="entry name" value="DEFENSIN-LIKE PROTEIN 1"/>
    <property type="match status" value="1"/>
</dbReference>
<dbReference type="Pfam" id="PF00304">
    <property type="entry name" value="Gamma-thionin"/>
    <property type="match status" value="1"/>
</dbReference>
<dbReference type="PRINTS" id="PR00288">
    <property type="entry name" value="PUROTHIONIN"/>
</dbReference>
<dbReference type="SMART" id="SM00505">
    <property type="entry name" value="Knot1"/>
    <property type="match status" value="1"/>
</dbReference>
<dbReference type="SUPFAM" id="SSF57095">
    <property type="entry name" value="Scorpion toxin-like"/>
    <property type="match status" value="1"/>
</dbReference>
<dbReference type="PROSITE" id="PS00940">
    <property type="entry name" value="GAMMA_THIONIN"/>
    <property type="match status" value="1"/>
</dbReference>
<feature type="signal peptide" evidence="2">
    <location>
        <begin position="1"/>
        <end position="25"/>
    </location>
</feature>
<feature type="chain" id="PRO_0000007044" description="Defensin-like protein 1">
    <location>
        <begin position="26"/>
        <end position="106"/>
    </location>
</feature>
<feature type="disulfide bond" evidence="1">
    <location>
        <begin position="29"/>
        <end position="73"/>
    </location>
</feature>
<feature type="disulfide bond" evidence="1">
    <location>
        <begin position="40"/>
        <end position="60"/>
    </location>
</feature>
<feature type="disulfide bond" evidence="1">
    <location>
        <begin position="46"/>
        <end position="67"/>
    </location>
</feature>
<feature type="disulfide bond" evidence="1">
    <location>
        <begin position="50"/>
        <end position="69"/>
    </location>
</feature>
<proteinExistence type="evidence at transcript level"/>
<accession>O24115</accession>
<reference key="1">
    <citation type="online journal article" date="1997" name="Plant Gene Register">
        <title>A cDNA clone for gamma-thionin from Nicotiana paniculata.</title>
        <authorList>
            <person name="Komori T."/>
            <person name="Yamada S."/>
            <person name="Imaseki H."/>
        </authorList>
        <locator>PGR97-132</locator>
    </citation>
    <scope>NUCLEOTIDE SEQUENCE [MRNA]</scope>
    <source>
        <tissue>Leaf</tissue>
    </source>
</reference>